<keyword id="KW-0002">3D-structure</keyword>
<keyword id="KW-0903">Direct protein sequencing</keyword>
<keyword id="KW-1015">Disulfide bond</keyword>
<keyword id="KW-0378">Hydrolase</keyword>
<keyword id="KW-0442">Lipid degradation</keyword>
<keyword id="KW-0443">Lipid metabolism</keyword>
<keyword id="KW-0677">Repeat</keyword>
<keyword id="KW-0964">Secreted</keyword>
<keyword id="KW-0732">Signal</keyword>
<sequence>MTSDQRPARLPTHKGKLLAPHRLHRLIPVSVALTTVCAALPSSTAYAADTPPTPHLDAIERSLRDTSPGLEGSVWQRTDGNRLDAPDGDPAGWLLQTPGCWGDAGCKDRAGTRRLLDKMTRNIADARHTVDISSLAPFPNGGFEDAVVDGLKAVVAAGHSPRVRILVGAAPIYHLNVVPSRYRDELIGKLGAAAGKVTLNVASMTTSKTSLSWNHSKLLVVDGKTAITGGINGWKDDYLDTAHPVSDVDMALSGPAAASAGKYLDTLWDWTCRNASDPAKVWLATSNGASCMPSMEQDEAGSAPAEPTGDVPVIAVGGLGVGIKESDPSSGYHPDLPTAPDTKCTVGLHDNTNADRDYDTVNPEENALRSLIASARSHVEISQQDLNATCPPLPRYDIRTYDTLAGKLAAGVKVRIVVSDPANRGAVGSGGYSQIKSLDEISDTLRTRLVALTGDNEKASRALCGNLQLASFRSSDAAKWADGKPYALHHKLVSVDDSAFYIGSKNLYPAWLQDFGYIVESPAAAQQLKTELLDPEWKYSQQAAATPAGCPARQAG</sequence>
<evidence type="ECO:0000255" key="1">
    <source>
        <dbReference type="PROSITE-ProRule" id="PRU00153"/>
    </source>
</evidence>
<evidence type="ECO:0000256" key="2">
    <source>
        <dbReference type="SAM" id="MobiDB-lite"/>
    </source>
</evidence>
<evidence type="ECO:0000269" key="3">
    <source>
    </source>
</evidence>
<evidence type="ECO:0000269" key="4">
    <source ref="2"/>
</evidence>
<evidence type="ECO:0000303" key="5">
    <source>
    </source>
</evidence>
<evidence type="ECO:0000305" key="6"/>
<evidence type="ECO:0000305" key="7">
    <source ref="2"/>
</evidence>
<evidence type="ECO:0007744" key="8">
    <source>
        <dbReference type="PDB" id="2ZE4"/>
    </source>
</evidence>
<evidence type="ECO:0007744" key="9">
    <source>
        <dbReference type="PDB" id="2ZE9"/>
    </source>
</evidence>
<evidence type="ECO:0007829" key="10">
    <source>
        <dbReference type="PDB" id="2ZE4"/>
    </source>
</evidence>
<evidence type="ECO:0007829" key="11">
    <source>
        <dbReference type="PDB" id="2ZE9"/>
    </source>
</evidence>
<evidence type="ECO:0007829" key="12">
    <source>
        <dbReference type="PDB" id="7JRC"/>
    </source>
</evidence>
<evidence type="ECO:0007829" key="13">
    <source>
        <dbReference type="PDB" id="7JRW"/>
    </source>
</evidence>
<accession>Q53728</accession>
<feature type="signal peptide" evidence="3">
    <location>
        <begin position="1"/>
        <end position="47"/>
    </location>
</feature>
<feature type="chain" id="PRO_0000024657" description="Phospholipase D">
    <location>
        <begin position="48"/>
        <end position="556"/>
    </location>
</feature>
<feature type="domain" description="PLD phosphodiesterase 1" evidence="1">
    <location>
        <begin position="210"/>
        <end position="237"/>
    </location>
</feature>
<feature type="domain" description="PLD phosphodiesterase 2" evidence="1">
    <location>
        <begin position="484"/>
        <end position="511"/>
    </location>
</feature>
<feature type="region of interest" description="Disordered" evidence="2">
    <location>
        <begin position="326"/>
        <end position="360"/>
    </location>
</feature>
<feature type="sequence conflict" description="In Ref. 1; AA sequence." evidence="6" ref="1">
    <original>D</original>
    <variation>L</variation>
    <location>
        <position position="57"/>
    </location>
</feature>
<feature type="sequence conflict" description="In Ref. 1; AA sequence." evidence="6" ref="1">
    <original>S</original>
    <variation>A</variation>
    <location>
        <position position="330"/>
    </location>
</feature>
<feature type="helix" evidence="13">
    <location>
        <begin position="54"/>
        <end position="66"/>
    </location>
</feature>
<feature type="helix" evidence="13">
    <location>
        <begin position="68"/>
        <end position="70"/>
    </location>
</feature>
<feature type="turn" evidence="13">
    <location>
        <begin position="71"/>
        <end position="73"/>
    </location>
</feature>
<feature type="strand" evidence="13">
    <location>
        <begin position="74"/>
        <end position="83"/>
    </location>
</feature>
<feature type="turn" evidence="13">
    <location>
        <begin position="90"/>
        <end position="93"/>
    </location>
</feature>
<feature type="strand" evidence="13">
    <location>
        <begin position="94"/>
        <end position="98"/>
    </location>
</feature>
<feature type="helix" evidence="13">
    <location>
        <begin position="110"/>
        <end position="124"/>
    </location>
</feature>
<feature type="strand" evidence="13">
    <location>
        <begin position="127"/>
        <end position="137"/>
    </location>
</feature>
<feature type="helix" evidence="13">
    <location>
        <begin position="141"/>
        <end position="156"/>
    </location>
</feature>
<feature type="strand" evidence="13">
    <location>
        <begin position="162"/>
        <end position="168"/>
    </location>
</feature>
<feature type="helix" evidence="13">
    <location>
        <begin position="179"/>
        <end position="190"/>
    </location>
</feature>
<feature type="helix" evidence="13">
    <location>
        <begin position="191"/>
        <end position="196"/>
    </location>
</feature>
<feature type="strand" evidence="13">
    <location>
        <begin position="198"/>
        <end position="204"/>
    </location>
</feature>
<feature type="turn" evidence="13">
    <location>
        <begin position="208"/>
        <end position="211"/>
    </location>
</feature>
<feature type="strand" evidence="10">
    <location>
        <begin position="212"/>
        <end position="214"/>
    </location>
</feature>
<feature type="strand" evidence="13">
    <location>
        <begin position="218"/>
        <end position="221"/>
    </location>
</feature>
<feature type="turn" evidence="13">
    <location>
        <begin position="222"/>
        <end position="224"/>
    </location>
</feature>
<feature type="strand" evidence="13">
    <location>
        <begin position="225"/>
        <end position="230"/>
    </location>
</feature>
<feature type="helix" evidence="13">
    <location>
        <begin position="235"/>
        <end position="238"/>
    </location>
</feature>
<feature type="strand" evidence="11">
    <location>
        <begin position="240"/>
        <end position="243"/>
    </location>
</feature>
<feature type="strand" evidence="13">
    <location>
        <begin position="246"/>
        <end position="254"/>
    </location>
</feature>
<feature type="helix" evidence="13">
    <location>
        <begin position="255"/>
        <end position="274"/>
    </location>
</feature>
<feature type="turn" evidence="13">
    <location>
        <begin position="278"/>
        <end position="280"/>
    </location>
</feature>
<feature type="strand" evidence="13">
    <location>
        <begin position="281"/>
        <end position="286"/>
    </location>
</feature>
<feature type="helix" evidence="13">
    <location>
        <begin position="295"/>
        <end position="300"/>
    </location>
</feature>
<feature type="strand" evidence="13">
    <location>
        <begin position="309"/>
        <end position="319"/>
    </location>
</feature>
<feature type="strand" evidence="13">
    <location>
        <begin position="321"/>
        <end position="323"/>
    </location>
</feature>
<feature type="turn" evidence="13">
    <location>
        <begin position="351"/>
        <end position="353"/>
    </location>
</feature>
<feature type="helix" evidence="13">
    <location>
        <begin position="356"/>
        <end position="361"/>
    </location>
</feature>
<feature type="helix" evidence="13">
    <location>
        <begin position="363"/>
        <end position="373"/>
    </location>
</feature>
<feature type="strand" evidence="13">
    <location>
        <begin position="376"/>
        <end position="384"/>
    </location>
</feature>
<feature type="turn" evidence="13">
    <location>
        <begin position="390"/>
        <end position="392"/>
    </location>
</feature>
<feature type="helix" evidence="13">
    <location>
        <begin position="398"/>
        <end position="409"/>
    </location>
</feature>
<feature type="strand" evidence="13">
    <location>
        <begin position="413"/>
        <end position="418"/>
    </location>
</feature>
<feature type="helix" evidence="11">
    <location>
        <begin position="421"/>
        <end position="423"/>
    </location>
</feature>
<feature type="strand" evidence="11">
    <location>
        <begin position="426"/>
        <end position="429"/>
    </location>
</feature>
<feature type="helix" evidence="13">
    <location>
        <begin position="439"/>
        <end position="453"/>
    </location>
</feature>
<feature type="helix" evidence="13">
    <location>
        <begin position="456"/>
        <end position="466"/>
    </location>
</feature>
<feature type="strand" evidence="13">
    <location>
        <begin position="467"/>
        <end position="471"/>
    </location>
</feature>
<feature type="strand" evidence="13">
    <location>
        <begin position="474"/>
        <end position="476"/>
    </location>
</feature>
<feature type="strand" evidence="12">
    <location>
        <begin position="483"/>
        <end position="485"/>
    </location>
</feature>
<feature type="strand" evidence="13">
    <location>
        <begin position="491"/>
        <end position="495"/>
    </location>
</feature>
<feature type="turn" evidence="13">
    <location>
        <begin position="496"/>
        <end position="498"/>
    </location>
</feature>
<feature type="strand" evidence="13">
    <location>
        <begin position="499"/>
        <end position="504"/>
    </location>
</feature>
<feature type="strand" evidence="13">
    <location>
        <begin position="512"/>
        <end position="520"/>
    </location>
</feature>
<feature type="helix" evidence="13">
    <location>
        <begin position="522"/>
        <end position="531"/>
    </location>
</feature>
<feature type="helix" evidence="13">
    <location>
        <begin position="533"/>
        <end position="540"/>
    </location>
</feature>
<feature type="helix" evidence="13">
    <location>
        <begin position="541"/>
        <end position="543"/>
    </location>
</feature>
<protein>
    <recommendedName>
        <fullName evidence="5">Phospholipase D</fullName>
        <ecNumber evidence="4">3.1.4.4</ecNumber>
    </recommendedName>
    <alternativeName>
        <fullName>Choline phosphatase</fullName>
    </alternativeName>
</protein>
<reference key="1">
    <citation type="journal article" date="1994" name="Appl. Microbiol. Biotechnol.">
        <title>Phospholipase D from Streptomyces antibioticus: cloning, sequencing, expression, and relationship to other phospholipases.</title>
        <authorList>
            <person name="Iwasaki Y."/>
            <person name="Nakano H."/>
            <person name="Yamane T."/>
        </authorList>
    </citation>
    <scope>NUCLEOTIDE SEQUENCE [GENOMIC DNA]</scope>
    <scope>PROTEIN SEQUENCE OF 48-60; 225-231; 300-312; 325-339; 414-432; 489-524 AND 530-538</scope>
    <scope>SUBCELLULAR LOCATION</scope>
</reference>
<reference key="2">
    <citation type="journal article" date="1993" name="Biosci. Biotechnol. Biochem.">
        <title>Purification and properties of phospholipase D of Streptomyces antibioticus.</title>
        <authorList>
            <person name="Shimbo K."/>
            <person name="Iwasaki Y."/>
            <person name="Yamane T."/>
            <person name="Ina K."/>
        </authorList>
    </citation>
    <scope>FUNCTION</scope>
    <scope>CATALYTIC ACTIVITY</scope>
    <scope>SUBSTRATE SPECIFICITY</scope>
    <scope>ACTIVITY REGULATION</scope>
    <scope>BIOPHYSICOCHEMICAL PROPERTIES</scope>
    <scope>SUBCELLULAR LOCATION</scope>
    <scope>DISULFIDE BOND</scope>
    <scope>BIOTECHNOLOGY</scope>
    <source>
        <strain>S-170</strain>
    </source>
</reference>
<reference evidence="8" key="3">
    <citation type="submission" date="2007-12" db="PDB data bank">
        <title>Crystal structure of phospholipase D from streptomyces antibioticus.</title>
        <authorList>
            <person name="Suzuki A."/>
            <person name="Kakuno K."/>
            <person name="Saito R."/>
            <person name="Iwasaki Y."/>
            <person name="Yamane T."/>
            <person name="Yamane T."/>
        </authorList>
    </citation>
    <scope>X-RAY CRYSTALLOGRAPHY (2.50 ANGSTROMS) OF 48-556</scope>
</reference>
<reference evidence="9" key="4">
    <citation type="submission" date="2007-12" db="PDB data bank">
        <title>Crystal structure of phospholipase D from streptomyces antibioticus.</title>
        <authorList>
            <person name="Suzuki A."/>
            <person name="Toda H."/>
            <person name="Iwasaki Y."/>
            <person name="Yamane T."/>
            <person name="Yamane T."/>
        </authorList>
    </citation>
    <scope>X-RAY CRYSTALLOGRAPHY (2.30 ANGSTROMS) OF 48-556</scope>
</reference>
<comment type="function">
    <text evidence="4">A reversible phospholipase active on phosphatidylcholine (PC) and phosphatidylethanolamine. Lysophosphatidylcholine and egg sphingomyelin are hydrolyzed about 50 times and 100 times more slowly than PC, respectively. During the transphosphatidylation reaction straight-chain hydroxy compounds, such as triethyleneglycol and triethyleneglycol monomethyl ether, were phosphatidylated in good yield, as were monosaccharides. Disaccharides and sugar alcohol reacted slowly, while N-acetyl-D-galactosamine, D-galactosamine and D-galacturonic acid were not phosphatidylated.</text>
</comment>
<comment type="catalytic activity">
    <reaction evidence="4">
        <text>a 1,2-diacyl-sn-glycero-3-phosphocholine + H2O = a 1,2-diacyl-sn-glycero-3-phosphate + choline + H(+)</text>
        <dbReference type="Rhea" id="RHEA:14445"/>
        <dbReference type="ChEBI" id="CHEBI:15354"/>
        <dbReference type="ChEBI" id="CHEBI:15377"/>
        <dbReference type="ChEBI" id="CHEBI:15378"/>
        <dbReference type="ChEBI" id="CHEBI:57643"/>
        <dbReference type="ChEBI" id="CHEBI:58608"/>
        <dbReference type="EC" id="3.1.4.4"/>
    </reaction>
    <physiologicalReaction direction="left-to-right" evidence="4">
        <dbReference type="Rhea" id="RHEA:14446"/>
    </physiologicalReaction>
    <physiologicalReaction direction="right-to-left" evidence="4">
        <dbReference type="Rhea" id="RHEA:14447"/>
    </physiologicalReaction>
</comment>
<comment type="activity regulation">
    <text evidence="4">Inhibited by mercaptoethanol and dithiothreitol.</text>
</comment>
<comment type="biophysicochemical properties">
    <phDependence>
        <text evidence="4">Optimum pH is 5.5 in both directions.</text>
    </phDependence>
    <temperatureDependence>
        <text evidence="4">Optimum temperature is 60 degrees Celsius in both directions.</text>
    </temperatureDependence>
</comment>
<comment type="subcellular location">
    <subcellularLocation>
        <location evidence="3 4">Secreted</location>
    </subcellularLocation>
</comment>
<comment type="PTM">
    <text evidence="7">Probably has at least 1 disulfide bond.</text>
</comment>
<comment type="biotechnology">
    <text evidence="4">May be useful in the production of emulsifiers.</text>
</comment>
<comment type="similarity">
    <text evidence="6">Belongs to the phospholipase D family.</text>
</comment>
<organism>
    <name type="scientific">Streptomyces antibioticus</name>
    <dbReference type="NCBI Taxonomy" id="1890"/>
    <lineage>
        <taxon>Bacteria</taxon>
        <taxon>Bacillati</taxon>
        <taxon>Actinomycetota</taxon>
        <taxon>Actinomycetes</taxon>
        <taxon>Kitasatosporales</taxon>
        <taxon>Streptomycetaceae</taxon>
        <taxon>Streptomyces</taxon>
    </lineage>
</organism>
<dbReference type="EC" id="3.1.4.4" evidence="4"/>
<dbReference type="EMBL" id="D16444">
    <property type="protein sequence ID" value="BAA03913.1"/>
    <property type="molecule type" value="Genomic_DNA"/>
</dbReference>
<dbReference type="PDB" id="2ZE4">
    <property type="method" value="X-ray"/>
    <property type="resolution" value="2.50 A"/>
    <property type="chains" value="A=48-556"/>
</dbReference>
<dbReference type="PDB" id="2ZE9">
    <property type="method" value="X-ray"/>
    <property type="resolution" value="2.30 A"/>
    <property type="chains" value="A=48-556"/>
</dbReference>
<dbReference type="PDB" id="7JRB">
    <property type="method" value="X-ray"/>
    <property type="resolution" value="2.49 A"/>
    <property type="chains" value="A=48-556"/>
</dbReference>
<dbReference type="PDB" id="7JRC">
    <property type="method" value="X-ray"/>
    <property type="resolution" value="2.01 A"/>
    <property type="chains" value="A=48-556"/>
</dbReference>
<dbReference type="PDB" id="7JRU">
    <property type="method" value="X-ray"/>
    <property type="resolution" value="2.21 A"/>
    <property type="chains" value="A=48-556"/>
</dbReference>
<dbReference type="PDB" id="7JRV">
    <property type="method" value="X-ray"/>
    <property type="resolution" value="2.42 A"/>
    <property type="chains" value="A=48-556"/>
</dbReference>
<dbReference type="PDB" id="7JRW">
    <property type="method" value="X-ray"/>
    <property type="resolution" value="1.99 A"/>
    <property type="chains" value="A=48-556"/>
</dbReference>
<dbReference type="PDB" id="7JS5">
    <property type="method" value="X-ray"/>
    <property type="resolution" value="2.50 A"/>
    <property type="chains" value="A=48-556"/>
</dbReference>
<dbReference type="PDB" id="7JS7">
    <property type="method" value="X-ray"/>
    <property type="resolution" value="2.30 A"/>
    <property type="chains" value="A/B=48-556"/>
</dbReference>
<dbReference type="PDBsum" id="2ZE4"/>
<dbReference type="PDBsum" id="2ZE9"/>
<dbReference type="PDBsum" id="7JRB"/>
<dbReference type="PDBsum" id="7JRC"/>
<dbReference type="PDBsum" id="7JRU"/>
<dbReference type="PDBsum" id="7JRV"/>
<dbReference type="PDBsum" id="7JRW"/>
<dbReference type="PDBsum" id="7JS5"/>
<dbReference type="PDBsum" id="7JS7"/>
<dbReference type="SMR" id="Q53728"/>
<dbReference type="DrugBank" id="DB08376">
    <property type="generic name" value="(2R)-3-(phosphonooxy)propane-1,2-diyl diheptanoate"/>
</dbReference>
<dbReference type="BRENDA" id="3.1.4.4">
    <property type="organism ID" value="5974"/>
</dbReference>
<dbReference type="EvolutionaryTrace" id="Q53728"/>
<dbReference type="GO" id="GO:0005576">
    <property type="term" value="C:extracellular region"/>
    <property type="evidence" value="ECO:0007669"/>
    <property type="project" value="UniProtKB-SubCell"/>
</dbReference>
<dbReference type="GO" id="GO:0030572">
    <property type="term" value="F:phosphatidyltransferase activity"/>
    <property type="evidence" value="ECO:0007669"/>
    <property type="project" value="UniProtKB-ARBA"/>
</dbReference>
<dbReference type="GO" id="GO:0004630">
    <property type="term" value="F:phospholipase D activity"/>
    <property type="evidence" value="ECO:0007669"/>
    <property type="project" value="UniProtKB-EC"/>
</dbReference>
<dbReference type="GO" id="GO:0032049">
    <property type="term" value="P:cardiolipin biosynthetic process"/>
    <property type="evidence" value="ECO:0007669"/>
    <property type="project" value="UniProtKB-ARBA"/>
</dbReference>
<dbReference type="GO" id="GO:0016042">
    <property type="term" value="P:lipid catabolic process"/>
    <property type="evidence" value="ECO:0007669"/>
    <property type="project" value="UniProtKB-KW"/>
</dbReference>
<dbReference type="CDD" id="cd09108">
    <property type="entry name" value="PLDc_PMFPLD_like_1"/>
    <property type="match status" value="1"/>
</dbReference>
<dbReference type="CDD" id="cd09109">
    <property type="entry name" value="PLDc_PMFPLD_like_2"/>
    <property type="match status" value="1"/>
</dbReference>
<dbReference type="Gene3D" id="3.30.870.10">
    <property type="entry name" value="Endonuclease Chain A"/>
    <property type="match status" value="2"/>
</dbReference>
<dbReference type="InterPro" id="IPR025202">
    <property type="entry name" value="PLD-like_dom"/>
</dbReference>
<dbReference type="InterPro" id="IPR001736">
    <property type="entry name" value="PLipase_D/transphosphatidylase"/>
</dbReference>
<dbReference type="PANTHER" id="PTHR21248">
    <property type="entry name" value="CARDIOLIPIN SYNTHASE"/>
    <property type="match status" value="1"/>
</dbReference>
<dbReference type="PANTHER" id="PTHR21248:SF22">
    <property type="entry name" value="PHOSPHOLIPASE D"/>
    <property type="match status" value="1"/>
</dbReference>
<dbReference type="Pfam" id="PF13091">
    <property type="entry name" value="PLDc_2"/>
    <property type="match status" value="1"/>
</dbReference>
<dbReference type="SMART" id="SM00155">
    <property type="entry name" value="PLDc"/>
    <property type="match status" value="2"/>
</dbReference>
<dbReference type="SUPFAM" id="SSF56024">
    <property type="entry name" value="Phospholipase D/nuclease"/>
    <property type="match status" value="2"/>
</dbReference>
<dbReference type="PROSITE" id="PS50035">
    <property type="entry name" value="PLD"/>
    <property type="match status" value="2"/>
</dbReference>
<name>PLD_STRAT</name>
<proteinExistence type="evidence at protein level"/>